<reference key="1">
    <citation type="submission" date="2006-08" db="EMBL/GenBank/DDBJ databases">
        <title>Complete sequence of Shewanella frigidimarina NCIMB 400.</title>
        <authorList>
            <consortium name="US DOE Joint Genome Institute"/>
            <person name="Copeland A."/>
            <person name="Lucas S."/>
            <person name="Lapidus A."/>
            <person name="Barry K."/>
            <person name="Detter J.C."/>
            <person name="Glavina del Rio T."/>
            <person name="Hammon N."/>
            <person name="Israni S."/>
            <person name="Dalin E."/>
            <person name="Tice H."/>
            <person name="Pitluck S."/>
            <person name="Fredrickson J.K."/>
            <person name="Kolker E."/>
            <person name="McCuel L.A."/>
            <person name="DiChristina T."/>
            <person name="Nealson K.H."/>
            <person name="Newman D."/>
            <person name="Tiedje J.M."/>
            <person name="Zhou J."/>
            <person name="Romine M.F."/>
            <person name="Culley D.E."/>
            <person name="Serres M."/>
            <person name="Chertkov O."/>
            <person name="Brettin T."/>
            <person name="Bruce D."/>
            <person name="Han C."/>
            <person name="Tapia R."/>
            <person name="Gilna P."/>
            <person name="Schmutz J."/>
            <person name="Larimer F."/>
            <person name="Land M."/>
            <person name="Hauser L."/>
            <person name="Kyrpides N."/>
            <person name="Mikhailova N."/>
            <person name="Richardson P."/>
        </authorList>
    </citation>
    <scope>NUCLEOTIDE SEQUENCE [LARGE SCALE GENOMIC DNA]</scope>
    <source>
        <strain>NCIMB 400</strain>
    </source>
</reference>
<organism>
    <name type="scientific">Shewanella frigidimarina (strain NCIMB 400)</name>
    <dbReference type="NCBI Taxonomy" id="318167"/>
    <lineage>
        <taxon>Bacteria</taxon>
        <taxon>Pseudomonadati</taxon>
        <taxon>Pseudomonadota</taxon>
        <taxon>Gammaproteobacteria</taxon>
        <taxon>Alteromonadales</taxon>
        <taxon>Shewanellaceae</taxon>
        <taxon>Shewanella</taxon>
    </lineage>
</organism>
<protein>
    <recommendedName>
        <fullName evidence="1">Catalase-peroxidase 1</fullName>
        <shortName evidence="1">CP 1</shortName>
        <ecNumber evidence="1">1.11.1.21</ecNumber>
    </recommendedName>
    <alternativeName>
        <fullName evidence="1">Peroxidase/catalase 1</fullName>
    </alternativeName>
</protein>
<feature type="signal peptide" evidence="1">
    <location>
        <begin position="1"/>
        <end position="16"/>
    </location>
</feature>
<feature type="chain" id="PRO_0000354918" description="Catalase-peroxidase 1">
    <location>
        <begin position="17"/>
        <end position="728"/>
    </location>
</feature>
<feature type="active site" description="Proton acceptor" evidence="1">
    <location>
        <position position="98"/>
    </location>
</feature>
<feature type="binding site" description="axial binding residue" evidence="1">
    <location>
        <position position="266"/>
    </location>
    <ligand>
        <name>heme b</name>
        <dbReference type="ChEBI" id="CHEBI:60344"/>
    </ligand>
    <ligandPart>
        <name>Fe</name>
        <dbReference type="ChEBI" id="CHEBI:18248"/>
    </ligandPart>
</feature>
<feature type="site" description="Transition state stabilizer" evidence="1">
    <location>
        <position position="94"/>
    </location>
</feature>
<feature type="cross-link" description="Tryptophyl-tyrosyl-methioninium (Trp-Tyr) (with M-251)" evidence="1">
    <location>
        <begin position="97"/>
        <end position="225"/>
    </location>
</feature>
<feature type="cross-link" description="Tryptophyl-tyrosyl-methioninium (Tyr-Met) (with W-97)" evidence="1">
    <location>
        <begin position="225"/>
        <end position="251"/>
    </location>
</feature>
<evidence type="ECO:0000255" key="1">
    <source>
        <dbReference type="HAMAP-Rule" id="MF_01961"/>
    </source>
</evidence>
<evidence type="ECO:0000305" key="2"/>
<proteinExistence type="inferred from homology"/>
<accession>Q082Q2</accession>
<comment type="function">
    <text evidence="1">Bifunctional enzyme with both catalase and broad-spectrum peroxidase activity.</text>
</comment>
<comment type="catalytic activity">
    <reaction evidence="1">
        <text>H2O2 + AH2 = A + 2 H2O</text>
        <dbReference type="Rhea" id="RHEA:30275"/>
        <dbReference type="ChEBI" id="CHEBI:13193"/>
        <dbReference type="ChEBI" id="CHEBI:15377"/>
        <dbReference type="ChEBI" id="CHEBI:16240"/>
        <dbReference type="ChEBI" id="CHEBI:17499"/>
        <dbReference type="EC" id="1.11.1.21"/>
    </reaction>
</comment>
<comment type="catalytic activity">
    <reaction evidence="1">
        <text>2 H2O2 = O2 + 2 H2O</text>
        <dbReference type="Rhea" id="RHEA:20309"/>
        <dbReference type="ChEBI" id="CHEBI:15377"/>
        <dbReference type="ChEBI" id="CHEBI:15379"/>
        <dbReference type="ChEBI" id="CHEBI:16240"/>
        <dbReference type="EC" id="1.11.1.21"/>
    </reaction>
</comment>
<comment type="cofactor">
    <cofactor evidence="1">
        <name>heme b</name>
        <dbReference type="ChEBI" id="CHEBI:60344"/>
    </cofactor>
    <text evidence="1">Binds 1 heme b (iron(II)-protoporphyrin IX) group per dimer.</text>
</comment>
<comment type="subunit">
    <text evidence="1">Homodimer or homotetramer.</text>
</comment>
<comment type="PTM">
    <text evidence="1">Formation of the three residue Trp-Tyr-Met cross-link is important for the catalase, but not the peroxidase activity of the enzyme.</text>
</comment>
<comment type="similarity">
    <text evidence="1">Belongs to the peroxidase family. Peroxidase/catalase subfamily.</text>
</comment>
<comment type="sequence caution" evidence="2">
    <conflict type="erroneous initiation">
        <sequence resource="EMBL-CDS" id="ABI71763"/>
    </conflict>
</comment>
<name>KATG1_SHEFN</name>
<keyword id="KW-0349">Heme</keyword>
<keyword id="KW-0376">Hydrogen peroxide</keyword>
<keyword id="KW-0408">Iron</keyword>
<keyword id="KW-0479">Metal-binding</keyword>
<keyword id="KW-0560">Oxidoreductase</keyword>
<keyword id="KW-0575">Peroxidase</keyword>
<keyword id="KW-1185">Reference proteome</keyword>
<keyword id="KW-0732">Signal</keyword>
<dbReference type="EC" id="1.11.1.21" evidence="1"/>
<dbReference type="EMBL" id="CP000447">
    <property type="protein sequence ID" value="ABI71763.1"/>
    <property type="status" value="ALT_INIT"/>
    <property type="molecule type" value="Genomic_DNA"/>
</dbReference>
<dbReference type="RefSeq" id="WP_041412930.1">
    <property type="nucleotide sequence ID" value="NC_008345.1"/>
</dbReference>
<dbReference type="SMR" id="Q082Q2"/>
<dbReference type="STRING" id="318167.Sfri_1917"/>
<dbReference type="PeroxiBase" id="2662">
    <property type="entry name" value="SfrCP01_NCIMB400"/>
</dbReference>
<dbReference type="KEGG" id="sfr:Sfri_1917"/>
<dbReference type="eggNOG" id="COG0376">
    <property type="taxonomic scope" value="Bacteria"/>
</dbReference>
<dbReference type="HOGENOM" id="CLU_025424_2_0_6"/>
<dbReference type="OrthoDB" id="9759743at2"/>
<dbReference type="Proteomes" id="UP000000684">
    <property type="component" value="Chromosome"/>
</dbReference>
<dbReference type="GO" id="GO:0005829">
    <property type="term" value="C:cytosol"/>
    <property type="evidence" value="ECO:0007669"/>
    <property type="project" value="TreeGrafter"/>
</dbReference>
<dbReference type="GO" id="GO:0004096">
    <property type="term" value="F:catalase activity"/>
    <property type="evidence" value="ECO:0007669"/>
    <property type="project" value="UniProtKB-UniRule"/>
</dbReference>
<dbReference type="GO" id="GO:0020037">
    <property type="term" value="F:heme binding"/>
    <property type="evidence" value="ECO:0007669"/>
    <property type="project" value="InterPro"/>
</dbReference>
<dbReference type="GO" id="GO:0046872">
    <property type="term" value="F:metal ion binding"/>
    <property type="evidence" value="ECO:0007669"/>
    <property type="project" value="UniProtKB-KW"/>
</dbReference>
<dbReference type="GO" id="GO:0070301">
    <property type="term" value="P:cellular response to hydrogen peroxide"/>
    <property type="evidence" value="ECO:0007669"/>
    <property type="project" value="TreeGrafter"/>
</dbReference>
<dbReference type="GO" id="GO:0042744">
    <property type="term" value="P:hydrogen peroxide catabolic process"/>
    <property type="evidence" value="ECO:0007669"/>
    <property type="project" value="UniProtKB-KW"/>
</dbReference>
<dbReference type="CDD" id="cd00649">
    <property type="entry name" value="catalase_peroxidase_1"/>
    <property type="match status" value="1"/>
</dbReference>
<dbReference type="FunFam" id="1.10.420.10:FF:000002">
    <property type="entry name" value="Catalase-peroxidase"/>
    <property type="match status" value="1"/>
</dbReference>
<dbReference type="FunFam" id="1.10.420.10:FF:000004">
    <property type="entry name" value="Catalase-peroxidase"/>
    <property type="match status" value="1"/>
</dbReference>
<dbReference type="FunFam" id="1.10.520.10:FF:000002">
    <property type="entry name" value="Catalase-peroxidase"/>
    <property type="match status" value="1"/>
</dbReference>
<dbReference type="Gene3D" id="1.10.520.10">
    <property type="match status" value="2"/>
</dbReference>
<dbReference type="Gene3D" id="1.10.420.10">
    <property type="entry name" value="Peroxidase, domain 2"/>
    <property type="match status" value="2"/>
</dbReference>
<dbReference type="HAMAP" id="MF_01961">
    <property type="entry name" value="Catal_peroxid"/>
    <property type="match status" value="1"/>
</dbReference>
<dbReference type="InterPro" id="IPR000763">
    <property type="entry name" value="Catalase_peroxidase"/>
</dbReference>
<dbReference type="InterPro" id="IPR002016">
    <property type="entry name" value="Haem_peroxidase"/>
</dbReference>
<dbReference type="InterPro" id="IPR010255">
    <property type="entry name" value="Haem_peroxidase_sf"/>
</dbReference>
<dbReference type="InterPro" id="IPR019794">
    <property type="entry name" value="Peroxidases_AS"/>
</dbReference>
<dbReference type="NCBIfam" id="TIGR00198">
    <property type="entry name" value="cat_per_HPI"/>
    <property type="match status" value="1"/>
</dbReference>
<dbReference type="NCBIfam" id="NF011635">
    <property type="entry name" value="PRK15061.1"/>
    <property type="match status" value="1"/>
</dbReference>
<dbReference type="PANTHER" id="PTHR30555:SF6">
    <property type="entry name" value="CATALASE-PEROXIDASE"/>
    <property type="match status" value="1"/>
</dbReference>
<dbReference type="PANTHER" id="PTHR30555">
    <property type="entry name" value="HYDROPEROXIDASE I, BIFUNCTIONAL CATALASE-PEROXIDASE"/>
    <property type="match status" value="1"/>
</dbReference>
<dbReference type="Pfam" id="PF00141">
    <property type="entry name" value="peroxidase"/>
    <property type="match status" value="2"/>
</dbReference>
<dbReference type="PRINTS" id="PR00460">
    <property type="entry name" value="BPEROXIDASE"/>
</dbReference>
<dbReference type="PRINTS" id="PR00458">
    <property type="entry name" value="PEROXIDASE"/>
</dbReference>
<dbReference type="SUPFAM" id="SSF48113">
    <property type="entry name" value="Heme-dependent peroxidases"/>
    <property type="match status" value="2"/>
</dbReference>
<dbReference type="PROSITE" id="PS00436">
    <property type="entry name" value="PEROXIDASE_2"/>
    <property type="match status" value="1"/>
</dbReference>
<dbReference type="PROSITE" id="PS50873">
    <property type="entry name" value="PEROXIDASE_4"/>
    <property type="match status" value="1"/>
</dbReference>
<sequence length="728" mass="81314">MDKAQHTQGKCPVAHGGNTTVASDVMEWWPNALNLDILHQHDNKTNPMDPNFDYREAFKSLDLSAVKQDLRALMTDSKDWWPADWGHYGGLMIRMAWHSAGTYRMADGRGGAGTGNQRFAPLNSWPDNANLDKARRLLWPIKKKYGNKLSWADLIILAGTIAYESMGLKTFGFAGGRADIWHPEKDIYWGSEKQWLAASDAENSRYSGQRDLENPLAAVMMGLIYVNPEGVDGQPDPLKTAQDIRVTFERMAMNDEETVALTAGGHTVGKCHGNGRAENLEAAPEGAELEDQGLGWLNKTSRGIGRDTVTSGIEGAWTTHPTQWDNGYFELLLNYDWELKKSPAGAWQWQPINIKEEHKPVDVEDPSIRLSPIMTDADMAMKMDPEYRKISDRFYQDPAYFSEVFARAWFKLTHRDLGPKSRYLGTDVPAEELIWQDPIPQVDYSLTEQEVTDIKAKILASGLSIAQLVATAWDSARTFRGSDFRGGANGARIRLAPQKDWQGNEPARLQKVLAVLATIQAGLTKSVSIADLIVLGGTAAVEKAAHAAGVHVKVPFAAGRGDSTLAQTDVESFDVLEPLHDAFRNWQKKDYVVQPEEMMLDRTQLMGLTAHEMTVLVGGMRVLGANYDNSKHGVFTDNVGVLSNDFFVNLTDMSYNWKPAGKNLYHIVDRSTDKVKWTATRVDLVFGSNSILRSYAEIYAQDDAKEKFVNDFVKTWTKVMNADRFDLM</sequence>
<gene>
    <name evidence="1" type="primary">katG1</name>
    <name type="ordered locus">Sfri_1917</name>
</gene>